<protein>
    <recommendedName>
        <fullName evidence="1">Protoheme IX farnesyltransferase</fullName>
        <ecNumber evidence="1">2.5.1.141</ecNumber>
    </recommendedName>
    <alternativeName>
        <fullName evidence="1">Heme B farnesyltransferase</fullName>
    </alternativeName>
    <alternativeName>
        <fullName evidence="1">Heme O synthase</fullName>
    </alternativeName>
</protein>
<reference key="1">
    <citation type="journal article" date="2003" name="DNA Res.">
        <title>Complete genome structure of Gloeobacter violaceus PCC 7421, a cyanobacterium that lacks thylakoids.</title>
        <authorList>
            <person name="Nakamura Y."/>
            <person name="Kaneko T."/>
            <person name="Sato S."/>
            <person name="Mimuro M."/>
            <person name="Miyashita H."/>
            <person name="Tsuchiya T."/>
            <person name="Sasamoto S."/>
            <person name="Watanabe A."/>
            <person name="Kawashima K."/>
            <person name="Kishida Y."/>
            <person name="Kiyokawa C."/>
            <person name="Kohara M."/>
            <person name="Matsumoto M."/>
            <person name="Matsuno A."/>
            <person name="Nakazaki N."/>
            <person name="Shimpo S."/>
            <person name="Takeuchi C."/>
            <person name="Yamada M."/>
            <person name="Tabata S."/>
        </authorList>
    </citation>
    <scope>NUCLEOTIDE SEQUENCE [LARGE SCALE GENOMIC DNA]</scope>
    <source>
        <strain>ATCC 29082 / PCC 7421</strain>
    </source>
</reference>
<gene>
    <name evidence="1" type="primary">ctaB</name>
    <name type="ordered locus">glr2166</name>
</gene>
<keyword id="KW-0997">Cell inner membrane</keyword>
<keyword id="KW-1003">Cell membrane</keyword>
<keyword id="KW-0350">Heme biosynthesis</keyword>
<keyword id="KW-0472">Membrane</keyword>
<keyword id="KW-1185">Reference proteome</keyword>
<keyword id="KW-0808">Transferase</keyword>
<keyword id="KW-0812">Transmembrane</keyword>
<keyword id="KW-1133">Transmembrane helix</keyword>
<accession>Q7NIL7</accession>
<dbReference type="EC" id="2.5.1.141" evidence="1"/>
<dbReference type="EMBL" id="BA000045">
    <property type="protein sequence ID" value="BAC90107.1"/>
    <property type="molecule type" value="Genomic_DNA"/>
</dbReference>
<dbReference type="RefSeq" id="NP_925112.1">
    <property type="nucleotide sequence ID" value="NC_005125.1"/>
</dbReference>
<dbReference type="RefSeq" id="WP_011142163.1">
    <property type="nucleotide sequence ID" value="NC_005125.1"/>
</dbReference>
<dbReference type="SMR" id="Q7NIL7"/>
<dbReference type="FunCoup" id="Q7NIL7">
    <property type="interactions" value="296"/>
</dbReference>
<dbReference type="STRING" id="251221.gene:10759661"/>
<dbReference type="EnsemblBacteria" id="BAC90107">
    <property type="protein sequence ID" value="BAC90107"/>
    <property type="gene ID" value="BAC90107"/>
</dbReference>
<dbReference type="KEGG" id="gvi:glr2166"/>
<dbReference type="PATRIC" id="fig|251221.4.peg.2200"/>
<dbReference type="eggNOG" id="COG0109">
    <property type="taxonomic scope" value="Bacteria"/>
</dbReference>
<dbReference type="HOGENOM" id="CLU_029631_0_0_3"/>
<dbReference type="InParanoid" id="Q7NIL7"/>
<dbReference type="OrthoDB" id="9814417at2"/>
<dbReference type="PhylomeDB" id="Q7NIL7"/>
<dbReference type="UniPathway" id="UPA00834">
    <property type="reaction ID" value="UER00712"/>
</dbReference>
<dbReference type="Proteomes" id="UP000000557">
    <property type="component" value="Chromosome"/>
</dbReference>
<dbReference type="GO" id="GO:0005886">
    <property type="term" value="C:plasma membrane"/>
    <property type="evidence" value="ECO:0007669"/>
    <property type="project" value="UniProtKB-SubCell"/>
</dbReference>
<dbReference type="GO" id="GO:0008495">
    <property type="term" value="F:protoheme IX farnesyltransferase activity"/>
    <property type="evidence" value="ECO:0000318"/>
    <property type="project" value="GO_Central"/>
</dbReference>
<dbReference type="GO" id="GO:0006783">
    <property type="term" value="P:heme biosynthetic process"/>
    <property type="evidence" value="ECO:0000318"/>
    <property type="project" value="GO_Central"/>
</dbReference>
<dbReference type="GO" id="GO:0048034">
    <property type="term" value="P:heme O biosynthetic process"/>
    <property type="evidence" value="ECO:0007669"/>
    <property type="project" value="UniProtKB-UniRule"/>
</dbReference>
<dbReference type="CDD" id="cd13957">
    <property type="entry name" value="PT_UbiA_Cox10"/>
    <property type="match status" value="1"/>
</dbReference>
<dbReference type="FunFam" id="1.10.357.140:FF:000001">
    <property type="entry name" value="Protoheme IX farnesyltransferase"/>
    <property type="match status" value="1"/>
</dbReference>
<dbReference type="Gene3D" id="1.10.357.140">
    <property type="entry name" value="UbiA prenyltransferase"/>
    <property type="match status" value="1"/>
</dbReference>
<dbReference type="Gene3D" id="1.20.120.1780">
    <property type="entry name" value="UbiA prenyltransferase"/>
    <property type="match status" value="1"/>
</dbReference>
<dbReference type="HAMAP" id="MF_00154">
    <property type="entry name" value="CyoE_CtaB"/>
    <property type="match status" value="1"/>
</dbReference>
<dbReference type="InterPro" id="IPR006369">
    <property type="entry name" value="Protohaem_IX_farnesylTrfase"/>
</dbReference>
<dbReference type="InterPro" id="IPR000537">
    <property type="entry name" value="UbiA_prenyltransferase"/>
</dbReference>
<dbReference type="InterPro" id="IPR030470">
    <property type="entry name" value="UbiA_prenylTrfase_CS"/>
</dbReference>
<dbReference type="InterPro" id="IPR044878">
    <property type="entry name" value="UbiA_sf"/>
</dbReference>
<dbReference type="NCBIfam" id="TIGR01473">
    <property type="entry name" value="cyoE_ctaB"/>
    <property type="match status" value="1"/>
</dbReference>
<dbReference type="NCBIfam" id="NF003349">
    <property type="entry name" value="PRK04375.1-2"/>
    <property type="match status" value="1"/>
</dbReference>
<dbReference type="PANTHER" id="PTHR43448:SF7">
    <property type="entry name" value="4-HYDROXYBENZOATE SOLANESYLTRANSFERASE"/>
    <property type="match status" value="1"/>
</dbReference>
<dbReference type="PANTHER" id="PTHR43448">
    <property type="entry name" value="PROTOHEME IX FARNESYLTRANSFERASE, MITOCHONDRIAL"/>
    <property type="match status" value="1"/>
</dbReference>
<dbReference type="Pfam" id="PF01040">
    <property type="entry name" value="UbiA"/>
    <property type="match status" value="1"/>
</dbReference>
<dbReference type="PROSITE" id="PS00943">
    <property type="entry name" value="UBIA"/>
    <property type="match status" value="1"/>
</dbReference>
<proteinExistence type="inferred from homology"/>
<organism>
    <name type="scientific">Gloeobacter violaceus (strain ATCC 29082 / PCC 7421)</name>
    <dbReference type="NCBI Taxonomy" id="251221"/>
    <lineage>
        <taxon>Bacteria</taxon>
        <taxon>Bacillati</taxon>
        <taxon>Cyanobacteriota</taxon>
        <taxon>Cyanophyceae</taxon>
        <taxon>Gloeobacterales</taxon>
        <taxon>Gloeobacteraceae</taxon>
        <taxon>Gloeobacter</taxon>
    </lineage>
</organism>
<comment type="function">
    <text evidence="1">Converts heme B (protoheme IX) to heme O by substitution of the vinyl group on carbon 2 of heme B porphyrin ring with a hydroxyethyl farnesyl side group.</text>
</comment>
<comment type="catalytic activity">
    <reaction evidence="1">
        <text>heme b + (2E,6E)-farnesyl diphosphate + H2O = Fe(II)-heme o + diphosphate</text>
        <dbReference type="Rhea" id="RHEA:28070"/>
        <dbReference type="ChEBI" id="CHEBI:15377"/>
        <dbReference type="ChEBI" id="CHEBI:33019"/>
        <dbReference type="ChEBI" id="CHEBI:60344"/>
        <dbReference type="ChEBI" id="CHEBI:60530"/>
        <dbReference type="ChEBI" id="CHEBI:175763"/>
        <dbReference type="EC" id="2.5.1.141"/>
    </reaction>
</comment>
<comment type="pathway">
    <text evidence="1">Porphyrin-containing compound metabolism; heme O biosynthesis; heme O from protoheme: step 1/1.</text>
</comment>
<comment type="subcellular location">
    <subcellularLocation>
        <location evidence="1">Cell inner membrane</location>
        <topology evidence="1">Multi-pass membrane protein</topology>
    </subcellularLocation>
</comment>
<comment type="miscellaneous">
    <text evidence="1">Carbon 2 of the heme B porphyrin ring is defined according to the Fischer nomenclature.</text>
</comment>
<comment type="similarity">
    <text evidence="1">Belongs to the UbiA prenyltransferase family. Protoheme IX farnesyltransferase subfamily.</text>
</comment>
<name>COXX_GLOVI</name>
<sequence length="305" mass="33404">MQETLLSRAERSVPRLSAALNDYYQLTKPRIQVLLLITTAGAMWIAGKGHVEPLLLLVTLLGGTLAASSANAFNCLIDRDIDLLMERTRRRAIPAGRILPWQAALFATALGVASFAVLAAFANLFAALLAISGIGFYVVIYTLWLKRTTTQNIVIGGAAGAIPPLVGWAAVTGDLGWSAWVLFGIIFMWTPPHFWALAMMIREDYRKAGVPMLPVVAGDEATARQIFIYTLVLVPVTLVLYPLGTMGWIYLLAAGALGLWLIEGAFRLLKAPNDRKESRSLFKRSIFYLMLLFVAMGIDSIFLFA</sequence>
<evidence type="ECO:0000255" key="1">
    <source>
        <dbReference type="HAMAP-Rule" id="MF_00154"/>
    </source>
</evidence>
<feature type="chain" id="PRO_0000327058" description="Protoheme IX farnesyltransferase">
    <location>
        <begin position="1"/>
        <end position="305"/>
    </location>
</feature>
<feature type="transmembrane region" description="Helical" evidence="1">
    <location>
        <begin position="31"/>
        <end position="51"/>
    </location>
</feature>
<feature type="transmembrane region" description="Helical" evidence="1">
    <location>
        <begin position="53"/>
        <end position="73"/>
    </location>
</feature>
<feature type="transmembrane region" description="Helical" evidence="1">
    <location>
        <begin position="98"/>
        <end position="118"/>
    </location>
</feature>
<feature type="transmembrane region" description="Helical" evidence="1">
    <location>
        <begin position="124"/>
        <end position="144"/>
    </location>
</feature>
<feature type="transmembrane region" description="Helical" evidence="1">
    <location>
        <begin position="153"/>
        <end position="173"/>
    </location>
</feature>
<feature type="transmembrane region" description="Helical" evidence="1">
    <location>
        <begin position="181"/>
        <end position="201"/>
    </location>
</feature>
<feature type="transmembrane region" description="Helical" evidence="1">
    <location>
        <begin position="221"/>
        <end position="241"/>
    </location>
</feature>
<feature type="transmembrane region" description="Helical" evidence="1">
    <location>
        <begin position="242"/>
        <end position="262"/>
    </location>
</feature>
<feature type="transmembrane region" description="Helical" evidence="1">
    <location>
        <begin position="285"/>
        <end position="305"/>
    </location>
</feature>